<comment type="subcellular location">
    <subcellularLocation>
        <location evidence="2">Membrane</location>
        <topology evidence="2">Multi-pass membrane protein</topology>
    </subcellularLocation>
</comment>
<comment type="similarity">
    <text evidence="2">Belongs to the IIV-6 118L/458R family.</text>
</comment>
<evidence type="ECO:0000255" key="1"/>
<evidence type="ECO:0000305" key="2"/>
<feature type="initiator methionine" description="Removed" evidence="1">
    <location>
        <position position="1"/>
    </location>
</feature>
<feature type="chain" id="PRO_0000377997" description="Putative myristoylated protein 118L">
    <location>
        <begin position="2"/>
        <end position="515"/>
    </location>
</feature>
<feature type="transmembrane region" description="Helical" evidence="1">
    <location>
        <begin position="188"/>
        <end position="208"/>
    </location>
</feature>
<feature type="transmembrane region" description="Helical" evidence="1">
    <location>
        <begin position="214"/>
        <end position="234"/>
    </location>
</feature>
<feature type="transmembrane region" description="Helical" evidence="1">
    <location>
        <begin position="482"/>
        <end position="502"/>
    </location>
</feature>
<feature type="lipid moiety-binding region" description="N-myristoyl glycine; by host" evidence="1">
    <location>
        <position position="2"/>
    </location>
</feature>
<gene>
    <name type="ORF">IIV6-118L</name>
</gene>
<organismHost>
    <name type="scientific">Acheta domesticus</name>
    <name type="common">House cricket</name>
    <dbReference type="NCBI Taxonomy" id="6997"/>
</organismHost>
<organismHost>
    <name type="scientific">Chilo suppressalis</name>
    <name type="common">Asiatic rice borer moth</name>
    <dbReference type="NCBI Taxonomy" id="168631"/>
</organismHost>
<organismHost>
    <name type="scientific">Gryllus bimaculatus</name>
    <name type="common">Two-spotted cricket</name>
    <dbReference type="NCBI Taxonomy" id="6999"/>
</organismHost>
<organismHost>
    <name type="scientific">Gryllus campestris</name>
    <dbReference type="NCBI Taxonomy" id="58607"/>
</organismHost>
<organismHost>
    <name type="scientific">Spodoptera frugiperda</name>
    <name type="common">Fall armyworm</name>
    <dbReference type="NCBI Taxonomy" id="7108"/>
</organismHost>
<protein>
    <recommendedName>
        <fullName>Putative myristoylated protein 118L</fullName>
    </recommendedName>
</protein>
<reference key="1">
    <citation type="journal article" date="2001" name="Virology">
        <title>Analysis of the first complete DNA sequence of an invertebrate iridovirus: coding strategy of the genome of Chilo iridescent virus.</title>
        <authorList>
            <person name="Jakob N.J."/>
            <person name="Mueller K."/>
            <person name="Bahr U."/>
            <person name="Darai G."/>
        </authorList>
    </citation>
    <scope>NUCLEOTIDE SEQUENCE [LARGE SCALE GENOMIC DNA]</scope>
</reference>
<reference key="2">
    <citation type="journal article" date="2007" name="Virol. J.">
        <title>Comparative genomic analysis of the family Iridoviridae: re-annotating and defining the core set of iridovirus genes.</title>
        <authorList>
            <person name="Eaton H.E."/>
            <person name="Metcalf J."/>
            <person name="Penny E."/>
            <person name="Tcherepanov V."/>
            <person name="Upton C."/>
            <person name="Brunetti C.R."/>
        </authorList>
    </citation>
    <scope>GENOME REANNOTATION</scope>
</reference>
<proteinExistence type="inferred from homology"/>
<organism>
    <name type="scientific">Invertebrate iridescent virus 6</name>
    <name type="common">IIV-6</name>
    <name type="synonym">Chilo iridescent virus</name>
    <dbReference type="NCBI Taxonomy" id="176652"/>
    <lineage>
        <taxon>Viruses</taxon>
        <taxon>Varidnaviria</taxon>
        <taxon>Bamfordvirae</taxon>
        <taxon>Nucleocytoviricota</taxon>
        <taxon>Megaviricetes</taxon>
        <taxon>Pimascovirales</taxon>
        <taxon>Iridoviridae</taxon>
        <taxon>Betairidovirinae</taxon>
        <taxon>Iridovirus</taxon>
    </lineage>
</organism>
<keyword id="KW-0449">Lipoprotein</keyword>
<keyword id="KW-0472">Membrane</keyword>
<keyword id="KW-0519">Myristate</keyword>
<keyword id="KW-1185">Reference proteome</keyword>
<keyword id="KW-0812">Transmembrane</keyword>
<keyword id="KW-1133">Transmembrane helix</keyword>
<accession>O55733</accession>
<dbReference type="EMBL" id="AF303741">
    <property type="protein sequence ID" value="AAB94444.1"/>
    <property type="molecule type" value="Genomic_DNA"/>
</dbReference>
<dbReference type="PIR" id="T03070">
    <property type="entry name" value="T03070"/>
</dbReference>
<dbReference type="RefSeq" id="NP_149581.1">
    <property type="nucleotide sequence ID" value="NC_003038.1"/>
</dbReference>
<dbReference type="KEGG" id="vg:1733161"/>
<dbReference type="OrthoDB" id="8902at10239"/>
<dbReference type="Proteomes" id="UP000001359">
    <property type="component" value="Genome"/>
</dbReference>
<dbReference type="GO" id="GO:0016020">
    <property type="term" value="C:membrane"/>
    <property type="evidence" value="ECO:0007669"/>
    <property type="project" value="UniProtKB-SubCell"/>
</dbReference>
<dbReference type="InterPro" id="IPR003472">
    <property type="entry name" value="Virion_mem_poxvirus_L1"/>
</dbReference>
<dbReference type="Pfam" id="PF02442">
    <property type="entry name" value="L1R_F9L"/>
    <property type="match status" value="1"/>
</dbReference>
<sequence length="515" mass="55327">MGASISSNVTKLVTDAIVRTSNEVVQTAHATNNQSIVFDVKNTSGDVVISGNTIRQTATINMVGLSQALNNSDNNIKLDQQIAQMAKAVISGLNLAQLADANNTVDSLIKTCIEIKNVTTQQCMMNTSQKINVLVEGTKGNVSIVNNEISQLATSIQSCVEKAASNNKNLQDITSSIQQAATSEAKGLSLAMIALIIVAMGLTGVGGVYAGGKIIFPAVLIGSIVSFVLYFQWTVREISSYSFVQNTLSESADCSIQKSSGESDNIGSAKSASEKCQNDNTCVAYEWQNGQAVYYKNMTIGNSCKSYYSNGAHKDTLPVIKKLIFQKGARNPVNTDVANAWLNTLDGSFWVNSDPNVLKYFGGRYGRLPYQTRYLYASGGTYVGDDVNGVGWNQQGSFGKRANRTIDWGDGPPSTITSQAEGDIWVDYHDPSLLKVYTYIAQQGGGFIWQSGQIIKGIGPIVNSNVENSKSVGFAIESKKQWLLYLAIGLLIVGVIGMAFSSGMFSKKNNGKSKQ</sequence>
<name>VF118_IIV6</name>